<feature type="chain" id="PRO_1000203714" description="Arginine repressor">
    <location>
        <begin position="1"/>
        <end position="156"/>
    </location>
</feature>
<keyword id="KW-0028">Amino-acid biosynthesis</keyword>
<keyword id="KW-0055">Arginine biosynthesis</keyword>
<keyword id="KW-0963">Cytoplasm</keyword>
<keyword id="KW-0238">DNA-binding</keyword>
<keyword id="KW-0678">Repressor</keyword>
<keyword id="KW-0804">Transcription</keyword>
<keyword id="KW-0805">Transcription regulation</keyword>
<evidence type="ECO:0000255" key="1">
    <source>
        <dbReference type="HAMAP-Rule" id="MF_00173"/>
    </source>
</evidence>
<organism>
    <name type="scientific">Edwardsiella ictaluri (strain 93-146)</name>
    <dbReference type="NCBI Taxonomy" id="634503"/>
    <lineage>
        <taxon>Bacteria</taxon>
        <taxon>Pseudomonadati</taxon>
        <taxon>Pseudomonadota</taxon>
        <taxon>Gammaproteobacteria</taxon>
        <taxon>Enterobacterales</taxon>
        <taxon>Hafniaceae</taxon>
        <taxon>Edwardsiella</taxon>
    </lineage>
</organism>
<name>ARGR_EDWI9</name>
<comment type="function">
    <text evidence="1">Regulates arginine biosynthesis genes.</text>
</comment>
<comment type="pathway">
    <text>Amino-acid biosynthesis; L-arginine biosynthesis [regulation].</text>
</comment>
<comment type="subcellular location">
    <subcellularLocation>
        <location evidence="1">Cytoplasm</location>
    </subcellularLocation>
</comment>
<comment type="similarity">
    <text evidence="1">Belongs to the ArgR family.</text>
</comment>
<gene>
    <name evidence="1" type="primary">argR</name>
    <name type="ordered locus">NT01EI_0445</name>
</gene>
<proteinExistence type="inferred from homology"/>
<reference key="1">
    <citation type="submission" date="2009-03" db="EMBL/GenBank/DDBJ databases">
        <title>Complete genome sequence of Edwardsiella ictaluri 93-146.</title>
        <authorList>
            <person name="Williams M.L."/>
            <person name="Gillaspy A.F."/>
            <person name="Dyer D.W."/>
            <person name="Thune R.L."/>
            <person name="Waldbieser G.C."/>
            <person name="Schuster S.C."/>
            <person name="Gipson J."/>
            <person name="Zaitshik J."/>
            <person name="Landry C."/>
            <person name="Lawrence M.L."/>
        </authorList>
    </citation>
    <scope>NUCLEOTIDE SEQUENCE [LARGE SCALE GENOMIC DNA]</scope>
    <source>
        <strain>93-146</strain>
    </source>
</reference>
<dbReference type="EMBL" id="CP001600">
    <property type="protein sequence ID" value="ACR67683.1"/>
    <property type="molecule type" value="Genomic_DNA"/>
</dbReference>
<dbReference type="RefSeq" id="WP_015869886.1">
    <property type="nucleotide sequence ID" value="NZ_CP169062.1"/>
</dbReference>
<dbReference type="SMR" id="C5BF97"/>
<dbReference type="STRING" id="67780.B6E78_12985"/>
<dbReference type="GeneID" id="69537532"/>
<dbReference type="KEGG" id="eic:NT01EI_0445"/>
<dbReference type="PATRIC" id="fig|634503.3.peg.404"/>
<dbReference type="HOGENOM" id="CLU_097103_2_0_6"/>
<dbReference type="OrthoDB" id="7060358at2"/>
<dbReference type="UniPathway" id="UPA00068"/>
<dbReference type="Proteomes" id="UP000001485">
    <property type="component" value="Chromosome"/>
</dbReference>
<dbReference type="GO" id="GO:0005737">
    <property type="term" value="C:cytoplasm"/>
    <property type="evidence" value="ECO:0007669"/>
    <property type="project" value="UniProtKB-SubCell"/>
</dbReference>
<dbReference type="GO" id="GO:0034618">
    <property type="term" value="F:arginine binding"/>
    <property type="evidence" value="ECO:0007669"/>
    <property type="project" value="InterPro"/>
</dbReference>
<dbReference type="GO" id="GO:0003677">
    <property type="term" value="F:DNA binding"/>
    <property type="evidence" value="ECO:0007669"/>
    <property type="project" value="UniProtKB-KW"/>
</dbReference>
<dbReference type="GO" id="GO:0003700">
    <property type="term" value="F:DNA-binding transcription factor activity"/>
    <property type="evidence" value="ECO:0007669"/>
    <property type="project" value="UniProtKB-UniRule"/>
</dbReference>
<dbReference type="GO" id="GO:0006526">
    <property type="term" value="P:L-arginine biosynthetic process"/>
    <property type="evidence" value="ECO:0007669"/>
    <property type="project" value="UniProtKB-UniPathway"/>
</dbReference>
<dbReference type="GO" id="GO:0051259">
    <property type="term" value="P:protein complex oligomerization"/>
    <property type="evidence" value="ECO:0007669"/>
    <property type="project" value="InterPro"/>
</dbReference>
<dbReference type="GO" id="GO:1900079">
    <property type="term" value="P:regulation of arginine biosynthetic process"/>
    <property type="evidence" value="ECO:0007669"/>
    <property type="project" value="UniProtKB-UniRule"/>
</dbReference>
<dbReference type="FunFam" id="1.10.10.10:FF:000074">
    <property type="entry name" value="Arginine repressor"/>
    <property type="match status" value="1"/>
</dbReference>
<dbReference type="FunFam" id="3.30.1360.40:FF:000004">
    <property type="entry name" value="Arginine repressor"/>
    <property type="match status" value="1"/>
</dbReference>
<dbReference type="Gene3D" id="3.30.1360.40">
    <property type="match status" value="1"/>
</dbReference>
<dbReference type="Gene3D" id="1.10.10.10">
    <property type="entry name" value="Winged helix-like DNA-binding domain superfamily/Winged helix DNA-binding domain"/>
    <property type="match status" value="1"/>
</dbReference>
<dbReference type="HAMAP" id="MF_00173">
    <property type="entry name" value="Arg_repressor"/>
    <property type="match status" value="1"/>
</dbReference>
<dbReference type="InterPro" id="IPR001669">
    <property type="entry name" value="Arg_repress"/>
</dbReference>
<dbReference type="InterPro" id="IPR020899">
    <property type="entry name" value="Arg_repress_C"/>
</dbReference>
<dbReference type="InterPro" id="IPR036251">
    <property type="entry name" value="Arg_repress_C_sf"/>
</dbReference>
<dbReference type="InterPro" id="IPR020900">
    <property type="entry name" value="Arg_repress_DNA-bd"/>
</dbReference>
<dbReference type="InterPro" id="IPR036388">
    <property type="entry name" value="WH-like_DNA-bd_sf"/>
</dbReference>
<dbReference type="InterPro" id="IPR036390">
    <property type="entry name" value="WH_DNA-bd_sf"/>
</dbReference>
<dbReference type="NCBIfam" id="TIGR01529">
    <property type="entry name" value="argR_whole"/>
    <property type="match status" value="1"/>
</dbReference>
<dbReference type="NCBIfam" id="NF003457">
    <property type="entry name" value="PRK05066.1"/>
    <property type="match status" value="1"/>
</dbReference>
<dbReference type="PANTHER" id="PTHR34471">
    <property type="entry name" value="ARGININE REPRESSOR"/>
    <property type="match status" value="1"/>
</dbReference>
<dbReference type="PANTHER" id="PTHR34471:SF1">
    <property type="entry name" value="ARGININE REPRESSOR"/>
    <property type="match status" value="1"/>
</dbReference>
<dbReference type="Pfam" id="PF01316">
    <property type="entry name" value="Arg_repressor"/>
    <property type="match status" value="1"/>
</dbReference>
<dbReference type="Pfam" id="PF02863">
    <property type="entry name" value="Arg_repressor_C"/>
    <property type="match status" value="1"/>
</dbReference>
<dbReference type="PRINTS" id="PR01467">
    <property type="entry name" value="ARGREPRESSOR"/>
</dbReference>
<dbReference type="SUPFAM" id="SSF55252">
    <property type="entry name" value="C-terminal domain of arginine repressor"/>
    <property type="match status" value="1"/>
</dbReference>
<dbReference type="SUPFAM" id="SSF46785">
    <property type="entry name" value="Winged helix' DNA-binding domain"/>
    <property type="match status" value="1"/>
</dbReference>
<accession>C5BF97</accession>
<protein>
    <recommendedName>
        <fullName evidence="1">Arginine repressor</fullName>
    </recommendedName>
</protein>
<sequence length="156" mass="16967">MRNTTKQEDLIKAFKALLKEEKFSSQGEIVQALQELGFDSINQSKVSRMLTKFGAVRTRNAKMEMVYCLPAELGVPTTSSPLKNLVLDVDHNDAIVVIHTSPGAAQLIARLLDSLGKSEGILGTIAGDDTIFTTPAKGFAVEQLYAAILALFEQEL</sequence>